<evidence type="ECO:0000250" key="1"/>
<evidence type="ECO:0000255" key="2">
    <source>
        <dbReference type="HAMAP-Rule" id="MF_00403"/>
    </source>
</evidence>
<evidence type="ECO:0000305" key="3"/>
<gene>
    <name evidence="2" type="primary">rpsL</name>
    <name type="ordered locus">Sbal195_0195</name>
</gene>
<proteinExistence type="inferred from homology"/>
<organism>
    <name type="scientific">Shewanella baltica (strain OS195)</name>
    <dbReference type="NCBI Taxonomy" id="399599"/>
    <lineage>
        <taxon>Bacteria</taxon>
        <taxon>Pseudomonadati</taxon>
        <taxon>Pseudomonadota</taxon>
        <taxon>Gammaproteobacteria</taxon>
        <taxon>Alteromonadales</taxon>
        <taxon>Shewanellaceae</taxon>
        <taxon>Shewanella</taxon>
    </lineage>
</organism>
<comment type="function">
    <text evidence="2">With S4 and S5 plays an important role in translational accuracy.</text>
</comment>
<comment type="function">
    <text evidence="2">Interacts with and stabilizes bases of the 16S rRNA that are involved in tRNA selection in the A site and with the mRNA backbone. Located at the interface of the 30S and 50S subunits, it traverses the body of the 30S subunit contacting proteins on the other side and probably holding the rRNA structure together. The combined cluster of proteins S8, S12 and S17 appears to hold together the shoulder and platform of the 30S subunit.</text>
</comment>
<comment type="subunit">
    <text evidence="2">Part of the 30S ribosomal subunit. Contacts proteins S8 and S17. May interact with IF1 in the 30S initiation complex.</text>
</comment>
<comment type="similarity">
    <text evidence="2">Belongs to the universal ribosomal protein uS12 family.</text>
</comment>
<accession>A9KW97</accession>
<name>RS12_SHEB9</name>
<reference key="1">
    <citation type="submission" date="2007-11" db="EMBL/GenBank/DDBJ databases">
        <title>Complete sequence of chromosome of Shewanella baltica OS195.</title>
        <authorList>
            <consortium name="US DOE Joint Genome Institute"/>
            <person name="Copeland A."/>
            <person name="Lucas S."/>
            <person name="Lapidus A."/>
            <person name="Barry K."/>
            <person name="Glavina del Rio T."/>
            <person name="Dalin E."/>
            <person name="Tice H."/>
            <person name="Pitluck S."/>
            <person name="Chain P."/>
            <person name="Malfatti S."/>
            <person name="Shin M."/>
            <person name="Vergez L."/>
            <person name="Schmutz J."/>
            <person name="Larimer F."/>
            <person name="Land M."/>
            <person name="Hauser L."/>
            <person name="Kyrpides N."/>
            <person name="Kim E."/>
            <person name="Brettar I."/>
            <person name="Rodrigues J."/>
            <person name="Konstantinidis K."/>
            <person name="Klappenbach J."/>
            <person name="Hofle M."/>
            <person name="Tiedje J."/>
            <person name="Richardson P."/>
        </authorList>
    </citation>
    <scope>NUCLEOTIDE SEQUENCE [LARGE SCALE GENOMIC DNA]</scope>
    <source>
        <strain>OS195</strain>
    </source>
</reference>
<protein>
    <recommendedName>
        <fullName evidence="2">Small ribosomal subunit protein uS12</fullName>
    </recommendedName>
    <alternativeName>
        <fullName evidence="3">30S ribosomal protein S12</fullName>
    </alternativeName>
</protein>
<keyword id="KW-0488">Methylation</keyword>
<keyword id="KW-0687">Ribonucleoprotein</keyword>
<keyword id="KW-0689">Ribosomal protein</keyword>
<keyword id="KW-0694">RNA-binding</keyword>
<keyword id="KW-0699">rRNA-binding</keyword>
<keyword id="KW-0820">tRNA-binding</keyword>
<sequence>MATVNQLVRKPRAPKVDKTNVPALNACPQKRGVCTRVYTTTPKKPNSALRKVARVRLTNGFEVTSYIGGEGHNLQEHSVILIRGGRVKDLPGVRYHTIRGALDCAGVTSRRQSRSKYGAKRPKS</sequence>
<dbReference type="EMBL" id="CP000891">
    <property type="protein sequence ID" value="ABX47377.1"/>
    <property type="molecule type" value="Genomic_DNA"/>
</dbReference>
<dbReference type="RefSeq" id="WP_006083605.1">
    <property type="nucleotide sequence ID" value="NC_009997.1"/>
</dbReference>
<dbReference type="SMR" id="A9KW97"/>
<dbReference type="GeneID" id="11770554"/>
<dbReference type="KEGG" id="sbn:Sbal195_0195"/>
<dbReference type="HOGENOM" id="CLU_104295_1_2_6"/>
<dbReference type="Proteomes" id="UP000000770">
    <property type="component" value="Chromosome"/>
</dbReference>
<dbReference type="GO" id="GO:0015935">
    <property type="term" value="C:small ribosomal subunit"/>
    <property type="evidence" value="ECO:0007669"/>
    <property type="project" value="InterPro"/>
</dbReference>
<dbReference type="GO" id="GO:0019843">
    <property type="term" value="F:rRNA binding"/>
    <property type="evidence" value="ECO:0007669"/>
    <property type="project" value="UniProtKB-UniRule"/>
</dbReference>
<dbReference type="GO" id="GO:0003735">
    <property type="term" value="F:structural constituent of ribosome"/>
    <property type="evidence" value="ECO:0007669"/>
    <property type="project" value="InterPro"/>
</dbReference>
<dbReference type="GO" id="GO:0000049">
    <property type="term" value="F:tRNA binding"/>
    <property type="evidence" value="ECO:0007669"/>
    <property type="project" value="UniProtKB-UniRule"/>
</dbReference>
<dbReference type="GO" id="GO:0006412">
    <property type="term" value="P:translation"/>
    <property type="evidence" value="ECO:0007669"/>
    <property type="project" value="UniProtKB-UniRule"/>
</dbReference>
<dbReference type="CDD" id="cd03368">
    <property type="entry name" value="Ribosomal_S12"/>
    <property type="match status" value="1"/>
</dbReference>
<dbReference type="FunFam" id="2.40.50.140:FF:000001">
    <property type="entry name" value="30S ribosomal protein S12"/>
    <property type="match status" value="1"/>
</dbReference>
<dbReference type="Gene3D" id="2.40.50.140">
    <property type="entry name" value="Nucleic acid-binding proteins"/>
    <property type="match status" value="1"/>
</dbReference>
<dbReference type="HAMAP" id="MF_00403_B">
    <property type="entry name" value="Ribosomal_uS12_B"/>
    <property type="match status" value="1"/>
</dbReference>
<dbReference type="InterPro" id="IPR012340">
    <property type="entry name" value="NA-bd_OB-fold"/>
</dbReference>
<dbReference type="InterPro" id="IPR006032">
    <property type="entry name" value="Ribosomal_uS12"/>
</dbReference>
<dbReference type="InterPro" id="IPR005679">
    <property type="entry name" value="Ribosomal_uS12_bac"/>
</dbReference>
<dbReference type="NCBIfam" id="TIGR00981">
    <property type="entry name" value="rpsL_bact"/>
    <property type="match status" value="1"/>
</dbReference>
<dbReference type="PANTHER" id="PTHR11652">
    <property type="entry name" value="30S RIBOSOMAL PROTEIN S12 FAMILY MEMBER"/>
    <property type="match status" value="1"/>
</dbReference>
<dbReference type="Pfam" id="PF00164">
    <property type="entry name" value="Ribosom_S12_S23"/>
    <property type="match status" value="1"/>
</dbReference>
<dbReference type="PIRSF" id="PIRSF002133">
    <property type="entry name" value="Ribosomal_S12/S23"/>
    <property type="match status" value="1"/>
</dbReference>
<dbReference type="PRINTS" id="PR01034">
    <property type="entry name" value="RIBOSOMALS12"/>
</dbReference>
<dbReference type="SUPFAM" id="SSF50249">
    <property type="entry name" value="Nucleic acid-binding proteins"/>
    <property type="match status" value="1"/>
</dbReference>
<dbReference type="PROSITE" id="PS00055">
    <property type="entry name" value="RIBOSOMAL_S12"/>
    <property type="match status" value="1"/>
</dbReference>
<feature type="chain" id="PRO_1000080414" description="Small ribosomal subunit protein uS12">
    <location>
        <begin position="1"/>
        <end position="124"/>
    </location>
</feature>
<feature type="modified residue" description="3-methylthioaspartic acid" evidence="1">
    <location>
        <position position="89"/>
    </location>
</feature>